<accession>Q31RK5</accession>
<organism>
    <name type="scientific">Synechococcus elongatus (strain ATCC 33912 / PCC 7942 / FACHB-805)</name>
    <name type="common">Anacystis nidulans R2</name>
    <dbReference type="NCBI Taxonomy" id="1140"/>
    <lineage>
        <taxon>Bacteria</taxon>
        <taxon>Bacillati</taxon>
        <taxon>Cyanobacteriota</taxon>
        <taxon>Cyanophyceae</taxon>
        <taxon>Synechococcales</taxon>
        <taxon>Synechococcaceae</taxon>
        <taxon>Synechococcus</taxon>
    </lineage>
</organism>
<sequence>MTETNFDFLAQGDPAIAAIIGRELQRQQEHLELIASENFASPAVMAAQGSVLTNKYAEGLPSKRYYGGCEFVDQAEELAIERAKELFGAAHANVQPHSGAQANFAVFLTLLQPGDTFLGMDLSHGGHLTHGSPVNVSGKWFNAGHYGVNRETERLDYDAIRELALQHRPKLIICGYSAYPRTIDFAKFREIADEVGAYLLADMAHIAGLVAAGLHPSPIPHCDVVTTTTHKTLRGPRGGLILTRDAELGKKLDKSVFPGTQGGPLEHVIAAKAVAFGEALRPEFKTYSAQVIANAQALARQLQARGLKIVSDGTDNHLLLVDLRSIGMTGKVADLLVSDVNITANKNTVPFDPESPFVTSGIRLGTAAMTTRGFKEAEFAIVADIIADRLLNPEDSSMEDSCRRRVLELCQRFPLYPHLSPATPVAV</sequence>
<evidence type="ECO:0000255" key="1">
    <source>
        <dbReference type="HAMAP-Rule" id="MF_00051"/>
    </source>
</evidence>
<reference key="1">
    <citation type="submission" date="2005-08" db="EMBL/GenBank/DDBJ databases">
        <title>Complete sequence of chromosome 1 of Synechococcus elongatus PCC 7942.</title>
        <authorList>
            <consortium name="US DOE Joint Genome Institute"/>
            <person name="Copeland A."/>
            <person name="Lucas S."/>
            <person name="Lapidus A."/>
            <person name="Barry K."/>
            <person name="Detter J.C."/>
            <person name="Glavina T."/>
            <person name="Hammon N."/>
            <person name="Israni S."/>
            <person name="Pitluck S."/>
            <person name="Schmutz J."/>
            <person name="Larimer F."/>
            <person name="Land M."/>
            <person name="Kyrpides N."/>
            <person name="Lykidis A."/>
            <person name="Golden S."/>
            <person name="Richardson P."/>
        </authorList>
    </citation>
    <scope>NUCLEOTIDE SEQUENCE [LARGE SCALE GENOMIC DNA]</scope>
    <source>
        <strain>ATCC 33912 / PCC 7942 / FACHB-805</strain>
    </source>
</reference>
<dbReference type="EC" id="2.1.2.1" evidence="1"/>
<dbReference type="EMBL" id="CP000100">
    <property type="protein sequence ID" value="ABB56314.1"/>
    <property type="molecule type" value="Genomic_DNA"/>
</dbReference>
<dbReference type="RefSeq" id="WP_011243543.1">
    <property type="nucleotide sequence ID" value="NZ_JACJTX010000002.1"/>
</dbReference>
<dbReference type="SMR" id="Q31RK5"/>
<dbReference type="STRING" id="1140.Synpcc7942_0282"/>
<dbReference type="PaxDb" id="1140-Synpcc7942_0282"/>
<dbReference type="GeneID" id="72429097"/>
<dbReference type="KEGG" id="syf:Synpcc7942_0282"/>
<dbReference type="eggNOG" id="COG0112">
    <property type="taxonomic scope" value="Bacteria"/>
</dbReference>
<dbReference type="HOGENOM" id="CLU_022477_2_1_3"/>
<dbReference type="OrthoDB" id="9803846at2"/>
<dbReference type="BioCyc" id="SYNEL:SYNPCC7942_0282-MONOMER"/>
<dbReference type="UniPathway" id="UPA00193"/>
<dbReference type="UniPathway" id="UPA00288">
    <property type="reaction ID" value="UER01023"/>
</dbReference>
<dbReference type="Proteomes" id="UP000889800">
    <property type="component" value="Chromosome"/>
</dbReference>
<dbReference type="GO" id="GO:0005829">
    <property type="term" value="C:cytosol"/>
    <property type="evidence" value="ECO:0007669"/>
    <property type="project" value="TreeGrafter"/>
</dbReference>
<dbReference type="GO" id="GO:0004372">
    <property type="term" value="F:glycine hydroxymethyltransferase activity"/>
    <property type="evidence" value="ECO:0007669"/>
    <property type="project" value="UniProtKB-UniRule"/>
</dbReference>
<dbReference type="GO" id="GO:0030170">
    <property type="term" value="F:pyridoxal phosphate binding"/>
    <property type="evidence" value="ECO:0007669"/>
    <property type="project" value="UniProtKB-UniRule"/>
</dbReference>
<dbReference type="GO" id="GO:0019264">
    <property type="term" value="P:glycine biosynthetic process from serine"/>
    <property type="evidence" value="ECO:0007669"/>
    <property type="project" value="UniProtKB-UniRule"/>
</dbReference>
<dbReference type="GO" id="GO:0035999">
    <property type="term" value="P:tetrahydrofolate interconversion"/>
    <property type="evidence" value="ECO:0007669"/>
    <property type="project" value="UniProtKB-UniRule"/>
</dbReference>
<dbReference type="CDD" id="cd00378">
    <property type="entry name" value="SHMT"/>
    <property type="match status" value="1"/>
</dbReference>
<dbReference type="FunFam" id="3.40.640.10:FF:000001">
    <property type="entry name" value="Serine hydroxymethyltransferase"/>
    <property type="match status" value="1"/>
</dbReference>
<dbReference type="FunFam" id="3.90.1150.10:FF:000003">
    <property type="entry name" value="Serine hydroxymethyltransferase"/>
    <property type="match status" value="1"/>
</dbReference>
<dbReference type="Gene3D" id="3.90.1150.10">
    <property type="entry name" value="Aspartate Aminotransferase, domain 1"/>
    <property type="match status" value="1"/>
</dbReference>
<dbReference type="Gene3D" id="3.40.640.10">
    <property type="entry name" value="Type I PLP-dependent aspartate aminotransferase-like (Major domain)"/>
    <property type="match status" value="1"/>
</dbReference>
<dbReference type="HAMAP" id="MF_00051">
    <property type="entry name" value="SHMT"/>
    <property type="match status" value="1"/>
</dbReference>
<dbReference type="InterPro" id="IPR015424">
    <property type="entry name" value="PyrdxlP-dep_Trfase"/>
</dbReference>
<dbReference type="InterPro" id="IPR015421">
    <property type="entry name" value="PyrdxlP-dep_Trfase_major"/>
</dbReference>
<dbReference type="InterPro" id="IPR015422">
    <property type="entry name" value="PyrdxlP-dep_Trfase_small"/>
</dbReference>
<dbReference type="InterPro" id="IPR001085">
    <property type="entry name" value="Ser_HO-MeTrfase"/>
</dbReference>
<dbReference type="InterPro" id="IPR049943">
    <property type="entry name" value="Ser_HO-MeTrfase-like"/>
</dbReference>
<dbReference type="InterPro" id="IPR019798">
    <property type="entry name" value="Ser_HO-MeTrfase_PLP_BS"/>
</dbReference>
<dbReference type="InterPro" id="IPR039429">
    <property type="entry name" value="SHMT-like_dom"/>
</dbReference>
<dbReference type="NCBIfam" id="NF000586">
    <property type="entry name" value="PRK00011.1"/>
    <property type="match status" value="1"/>
</dbReference>
<dbReference type="PANTHER" id="PTHR11680">
    <property type="entry name" value="SERINE HYDROXYMETHYLTRANSFERASE"/>
    <property type="match status" value="1"/>
</dbReference>
<dbReference type="PANTHER" id="PTHR11680:SF35">
    <property type="entry name" value="SERINE HYDROXYMETHYLTRANSFERASE 1"/>
    <property type="match status" value="1"/>
</dbReference>
<dbReference type="Pfam" id="PF00464">
    <property type="entry name" value="SHMT"/>
    <property type="match status" value="1"/>
</dbReference>
<dbReference type="PIRSF" id="PIRSF000412">
    <property type="entry name" value="SHMT"/>
    <property type="match status" value="1"/>
</dbReference>
<dbReference type="SUPFAM" id="SSF53383">
    <property type="entry name" value="PLP-dependent transferases"/>
    <property type="match status" value="1"/>
</dbReference>
<dbReference type="PROSITE" id="PS00096">
    <property type="entry name" value="SHMT"/>
    <property type="match status" value="1"/>
</dbReference>
<comment type="function">
    <text evidence="1">Catalyzes the reversible interconversion of serine and glycine with tetrahydrofolate (THF) serving as the one-carbon carrier. This reaction serves as the major source of one-carbon groups required for the biosynthesis of purines, thymidylate, methionine, and other important biomolecules. Also exhibits THF-independent aldolase activity toward beta-hydroxyamino acids, producing glycine and aldehydes, via a retro-aldol mechanism.</text>
</comment>
<comment type="catalytic activity">
    <reaction evidence="1">
        <text>(6R)-5,10-methylene-5,6,7,8-tetrahydrofolate + glycine + H2O = (6S)-5,6,7,8-tetrahydrofolate + L-serine</text>
        <dbReference type="Rhea" id="RHEA:15481"/>
        <dbReference type="ChEBI" id="CHEBI:15377"/>
        <dbReference type="ChEBI" id="CHEBI:15636"/>
        <dbReference type="ChEBI" id="CHEBI:33384"/>
        <dbReference type="ChEBI" id="CHEBI:57305"/>
        <dbReference type="ChEBI" id="CHEBI:57453"/>
        <dbReference type="EC" id="2.1.2.1"/>
    </reaction>
</comment>
<comment type="cofactor">
    <cofactor evidence="1">
        <name>pyridoxal 5'-phosphate</name>
        <dbReference type="ChEBI" id="CHEBI:597326"/>
    </cofactor>
</comment>
<comment type="pathway">
    <text evidence="1">One-carbon metabolism; tetrahydrofolate interconversion.</text>
</comment>
<comment type="pathway">
    <text evidence="1">Amino-acid biosynthesis; glycine biosynthesis; glycine from L-serine: step 1/1.</text>
</comment>
<comment type="subunit">
    <text evidence="1">Homodimer.</text>
</comment>
<comment type="subcellular location">
    <subcellularLocation>
        <location evidence="1">Cytoplasm</location>
    </subcellularLocation>
</comment>
<comment type="similarity">
    <text evidence="1">Belongs to the SHMT family.</text>
</comment>
<gene>
    <name evidence="1" type="primary">glyA</name>
    <name type="ordered locus">Synpcc7942_0282</name>
</gene>
<feature type="chain" id="PRO_0000235039" description="Serine hydroxymethyltransferase">
    <location>
        <begin position="1"/>
        <end position="427"/>
    </location>
</feature>
<feature type="binding site" evidence="1">
    <location>
        <position position="122"/>
    </location>
    <ligand>
        <name>(6S)-5,6,7,8-tetrahydrofolate</name>
        <dbReference type="ChEBI" id="CHEBI:57453"/>
    </ligand>
</feature>
<feature type="binding site" evidence="1">
    <location>
        <begin position="126"/>
        <end position="128"/>
    </location>
    <ligand>
        <name>(6S)-5,6,7,8-tetrahydrofolate</name>
        <dbReference type="ChEBI" id="CHEBI:57453"/>
    </ligand>
</feature>
<feature type="binding site" evidence="1">
    <location>
        <begin position="355"/>
        <end position="357"/>
    </location>
    <ligand>
        <name>(6S)-5,6,7,8-tetrahydrofolate</name>
        <dbReference type="ChEBI" id="CHEBI:57453"/>
    </ligand>
</feature>
<feature type="site" description="Plays an important role in substrate specificity" evidence="1">
    <location>
        <position position="230"/>
    </location>
</feature>
<feature type="modified residue" description="N6-(pyridoxal phosphate)lysine" evidence="1">
    <location>
        <position position="231"/>
    </location>
</feature>
<protein>
    <recommendedName>
        <fullName evidence="1">Serine hydroxymethyltransferase</fullName>
        <shortName evidence="1">SHMT</shortName>
        <shortName evidence="1">Serine methylase</shortName>
        <ecNumber evidence="1">2.1.2.1</ecNumber>
    </recommendedName>
</protein>
<proteinExistence type="inferred from homology"/>
<keyword id="KW-0028">Amino-acid biosynthesis</keyword>
<keyword id="KW-0963">Cytoplasm</keyword>
<keyword id="KW-0554">One-carbon metabolism</keyword>
<keyword id="KW-0663">Pyridoxal phosphate</keyword>
<keyword id="KW-1185">Reference proteome</keyword>
<keyword id="KW-0808">Transferase</keyword>
<name>GLYA_SYNE7</name>